<sequence>MTTQLEQAWELAKQRFAAVGIDVEEALRQLDRLPVSMHCWQGDDVAGFENPEGSLTGGIQSTGNYPGKARNATELRADLEQALRLIPGPKRLNLHAIYLESDTPVARDQIKPEHFKNWVEWAKANRLGLDFNPTCFSHPLSADGFTLSHPDAKIRQFWIDHCKASRRVSAYFGEQLGTPSVMNIWIPDGMKDITVDRLAPRQRLLEALDEVISEKFDPAHHIDAVESKLFGIGAESYTVGSNEFYMGYATSRQTALCLDAGHFHPTEVISDKISAAMLYVPRLLLHVSRPVRWDSDHVVLLDDETQAIASEIVRHNLFDRVHIGLDFFDASINRVAAWVIGTRNMKKALLRALLEPTDQLRQLEASGDYTARLALLEEQKSLPWQAVWEMYCQRHDTPAGSQWLDSVRAYEKEILSKRS</sequence>
<feature type="chain" id="PRO_1000128892" description="L-rhamnose isomerase">
    <location>
        <begin position="1"/>
        <end position="419"/>
    </location>
</feature>
<feature type="binding site" evidence="1">
    <location>
        <position position="262"/>
    </location>
    <ligand>
        <name>Mn(2+)</name>
        <dbReference type="ChEBI" id="CHEBI:29035"/>
    </ligand>
</feature>
<feature type="binding site" evidence="1">
    <location>
        <position position="294"/>
    </location>
    <ligand>
        <name>Mn(2+)</name>
        <dbReference type="ChEBI" id="CHEBI:29035"/>
    </ligand>
</feature>
<feature type="binding site" evidence="1">
    <location>
        <position position="296"/>
    </location>
    <ligand>
        <name>Mn(2+)</name>
        <dbReference type="ChEBI" id="CHEBI:29035"/>
    </ligand>
</feature>
<dbReference type="EC" id="5.3.1.14" evidence="1"/>
<dbReference type="EMBL" id="FM200053">
    <property type="protein sequence ID" value="CAR61899.1"/>
    <property type="molecule type" value="Genomic_DNA"/>
</dbReference>
<dbReference type="RefSeq" id="WP_000211468.1">
    <property type="nucleotide sequence ID" value="NC_011147.1"/>
</dbReference>
<dbReference type="SMR" id="B5BJG6"/>
<dbReference type="KEGG" id="sek:SSPA3617"/>
<dbReference type="HOGENOM" id="CLU_052790_0_0_6"/>
<dbReference type="UniPathway" id="UPA00541">
    <property type="reaction ID" value="UER00601"/>
</dbReference>
<dbReference type="Proteomes" id="UP000001869">
    <property type="component" value="Chromosome"/>
</dbReference>
<dbReference type="GO" id="GO:0005737">
    <property type="term" value="C:cytoplasm"/>
    <property type="evidence" value="ECO:0007669"/>
    <property type="project" value="UniProtKB-SubCell"/>
</dbReference>
<dbReference type="GO" id="GO:0008740">
    <property type="term" value="F:L-rhamnose isomerase activity"/>
    <property type="evidence" value="ECO:0007669"/>
    <property type="project" value="UniProtKB-UniRule"/>
</dbReference>
<dbReference type="GO" id="GO:0030145">
    <property type="term" value="F:manganese ion binding"/>
    <property type="evidence" value="ECO:0007669"/>
    <property type="project" value="UniProtKB-UniRule"/>
</dbReference>
<dbReference type="GO" id="GO:0019324">
    <property type="term" value="P:L-lyxose metabolic process"/>
    <property type="evidence" value="ECO:0007669"/>
    <property type="project" value="TreeGrafter"/>
</dbReference>
<dbReference type="GO" id="GO:0019301">
    <property type="term" value="P:rhamnose catabolic process"/>
    <property type="evidence" value="ECO:0007669"/>
    <property type="project" value="UniProtKB-UniRule"/>
</dbReference>
<dbReference type="FunFam" id="3.20.20.150:FF:000006">
    <property type="entry name" value="L-rhamnose isomerase"/>
    <property type="match status" value="1"/>
</dbReference>
<dbReference type="Gene3D" id="3.20.20.150">
    <property type="entry name" value="Divalent-metal-dependent TIM barrel enzymes"/>
    <property type="match status" value="1"/>
</dbReference>
<dbReference type="HAMAP" id="MF_00541">
    <property type="entry name" value="RhaA"/>
    <property type="match status" value="1"/>
</dbReference>
<dbReference type="InterPro" id="IPR050337">
    <property type="entry name" value="L-rhamnose_isomerase"/>
</dbReference>
<dbReference type="InterPro" id="IPR009308">
    <property type="entry name" value="Rhamnose_isomerase"/>
</dbReference>
<dbReference type="InterPro" id="IPR036237">
    <property type="entry name" value="Xyl_isomerase-like_sf"/>
</dbReference>
<dbReference type="NCBIfam" id="NF002203">
    <property type="entry name" value="PRK01076.1"/>
    <property type="match status" value="1"/>
</dbReference>
<dbReference type="NCBIfam" id="TIGR01748">
    <property type="entry name" value="rhaA"/>
    <property type="match status" value="1"/>
</dbReference>
<dbReference type="PANTHER" id="PTHR30268">
    <property type="entry name" value="L-RHAMNOSE ISOMERASE"/>
    <property type="match status" value="1"/>
</dbReference>
<dbReference type="PANTHER" id="PTHR30268:SF0">
    <property type="entry name" value="L-RHAMNOSE ISOMERASE"/>
    <property type="match status" value="1"/>
</dbReference>
<dbReference type="Pfam" id="PF06134">
    <property type="entry name" value="RhaA"/>
    <property type="match status" value="1"/>
</dbReference>
<dbReference type="SUPFAM" id="SSF51658">
    <property type="entry name" value="Xylose isomerase-like"/>
    <property type="match status" value="1"/>
</dbReference>
<gene>
    <name evidence="1" type="primary">rhaA</name>
    <name type="ordered locus">SSPA3617</name>
</gene>
<protein>
    <recommendedName>
        <fullName evidence="1">L-rhamnose isomerase</fullName>
        <ecNumber evidence="1">5.3.1.14</ecNumber>
    </recommendedName>
</protein>
<name>RHAA_SALPK</name>
<comment type="function">
    <text evidence="1">Catalyzes the interconversion of L-rhamnose and L-rhamnulose.</text>
</comment>
<comment type="catalytic activity">
    <reaction evidence="1">
        <text>L-rhamnopyranose = L-rhamnulose</text>
        <dbReference type="Rhea" id="RHEA:23160"/>
        <dbReference type="ChEBI" id="CHEBI:17897"/>
        <dbReference type="ChEBI" id="CHEBI:62346"/>
        <dbReference type="EC" id="5.3.1.14"/>
    </reaction>
</comment>
<comment type="cofactor">
    <cofactor evidence="1">
        <name>Mn(2+)</name>
        <dbReference type="ChEBI" id="CHEBI:29035"/>
    </cofactor>
    <text evidence="1">Binds 1 Mn(2+) ion per subunit.</text>
</comment>
<comment type="pathway">
    <text evidence="1">Carbohydrate degradation; L-rhamnose degradation; glycerone phosphate from L-rhamnose: step 1/3.</text>
</comment>
<comment type="subunit">
    <text evidence="1">Homotetramer.</text>
</comment>
<comment type="subcellular location">
    <subcellularLocation>
        <location evidence="1">Cytoplasm</location>
    </subcellularLocation>
</comment>
<comment type="similarity">
    <text evidence="1">Belongs to the rhamnose isomerase family.</text>
</comment>
<evidence type="ECO:0000255" key="1">
    <source>
        <dbReference type="HAMAP-Rule" id="MF_00541"/>
    </source>
</evidence>
<keyword id="KW-0963">Cytoplasm</keyword>
<keyword id="KW-0413">Isomerase</keyword>
<keyword id="KW-0464">Manganese</keyword>
<keyword id="KW-0479">Metal-binding</keyword>
<keyword id="KW-0684">Rhamnose metabolism</keyword>
<organism>
    <name type="scientific">Salmonella paratyphi A (strain AKU_12601)</name>
    <dbReference type="NCBI Taxonomy" id="554290"/>
    <lineage>
        <taxon>Bacteria</taxon>
        <taxon>Pseudomonadati</taxon>
        <taxon>Pseudomonadota</taxon>
        <taxon>Gammaproteobacteria</taxon>
        <taxon>Enterobacterales</taxon>
        <taxon>Enterobacteriaceae</taxon>
        <taxon>Salmonella</taxon>
    </lineage>
</organism>
<accession>B5BJG6</accession>
<proteinExistence type="inferred from homology"/>
<reference key="1">
    <citation type="journal article" date="2009" name="BMC Genomics">
        <title>Pseudogene accumulation in the evolutionary histories of Salmonella enterica serovars Paratyphi A and Typhi.</title>
        <authorList>
            <person name="Holt K.E."/>
            <person name="Thomson N.R."/>
            <person name="Wain J."/>
            <person name="Langridge G.C."/>
            <person name="Hasan R."/>
            <person name="Bhutta Z.A."/>
            <person name="Quail M.A."/>
            <person name="Norbertczak H."/>
            <person name="Walker D."/>
            <person name="Simmonds M."/>
            <person name="White B."/>
            <person name="Bason N."/>
            <person name="Mungall K."/>
            <person name="Dougan G."/>
            <person name="Parkhill J."/>
        </authorList>
    </citation>
    <scope>NUCLEOTIDE SEQUENCE [LARGE SCALE GENOMIC DNA]</scope>
    <source>
        <strain>AKU_12601</strain>
    </source>
</reference>